<gene>
    <name evidence="1" type="primary">proS</name>
    <name type="ordered locus">THA_280</name>
</gene>
<proteinExistence type="inferred from homology"/>
<evidence type="ECO:0000255" key="1">
    <source>
        <dbReference type="HAMAP-Rule" id="MF_01569"/>
    </source>
</evidence>
<name>SYP_THEAB</name>
<accession>B7IFB6</accession>
<keyword id="KW-0030">Aminoacyl-tRNA synthetase</keyword>
<keyword id="KW-0067">ATP-binding</keyword>
<keyword id="KW-0963">Cytoplasm</keyword>
<keyword id="KW-0436">Ligase</keyword>
<keyword id="KW-0547">Nucleotide-binding</keyword>
<keyword id="KW-0648">Protein biosynthesis</keyword>
<keyword id="KW-1185">Reference proteome</keyword>
<feature type="chain" id="PRO_1000199436" description="Proline--tRNA ligase">
    <location>
        <begin position="1"/>
        <end position="561"/>
    </location>
</feature>
<organism>
    <name type="scientific">Thermosipho africanus (strain TCF52B)</name>
    <dbReference type="NCBI Taxonomy" id="484019"/>
    <lineage>
        <taxon>Bacteria</taxon>
        <taxon>Thermotogati</taxon>
        <taxon>Thermotogota</taxon>
        <taxon>Thermotogae</taxon>
        <taxon>Thermotogales</taxon>
        <taxon>Fervidobacteriaceae</taxon>
        <taxon>Thermosipho</taxon>
    </lineage>
</organism>
<sequence>MRFSRLYAPTLREDPSDAEIPSQALLQRAGFIRKIAAGVYTYLPLARRTLLKIENIVREEMDKIGAQEILMPIIQPAELWQRSGRWDDYGPEMMKLKDRHNRDFTLGPTHEELVTELIRNELNSYKQLPVSLYQITTKFRDEIRPRFGVLRAREFIMKDAYSFHDSWESLDETYQLFKDAYSKIMERIGLRYSVIEAATGAIGGNESHEFVAFANTGESNVLYCDCGYAGSDERVPYKGDYEKDDEAEKTLEKVYTPNVRTVEQVAEFLNVPIRKIVKSLVFKGRDGFVMALVPGDRELNFEKLKAYLGDQSLQMAEAEEILEEFGVPIGFLGPVGADKVRIVADYGIKYMKNFVVGGMEKDYHYLNVNLDRDFKVNEWTDLVVVQIGDPCPVCGKPLKGEKGIELGHIFKLGTKYSDSMDVKYMDKDGKMKSFIMGCYGWGISRTLGAIVEQLHDDDGIIWPRSVAPYEVDIVVVGKEKEKEFSEKLYSYLLDKGVDVIIDDRNVSPGVKFKDADLIGFPIRITVGRKLKEGKVEIKERGKEAILVDANMEQILNAINEM</sequence>
<dbReference type="EC" id="6.1.1.15" evidence="1"/>
<dbReference type="EMBL" id="CP001185">
    <property type="protein sequence ID" value="ACJ74780.1"/>
    <property type="molecule type" value="Genomic_DNA"/>
</dbReference>
<dbReference type="RefSeq" id="WP_012579466.1">
    <property type="nucleotide sequence ID" value="NC_011653.1"/>
</dbReference>
<dbReference type="SMR" id="B7IFB6"/>
<dbReference type="STRING" id="484019.THA_280"/>
<dbReference type="KEGG" id="taf:THA_280"/>
<dbReference type="eggNOG" id="COG0442">
    <property type="taxonomic scope" value="Bacteria"/>
</dbReference>
<dbReference type="HOGENOM" id="CLU_016739_0_0_0"/>
<dbReference type="OrthoDB" id="9809052at2"/>
<dbReference type="Proteomes" id="UP000002453">
    <property type="component" value="Chromosome"/>
</dbReference>
<dbReference type="GO" id="GO:0005829">
    <property type="term" value="C:cytosol"/>
    <property type="evidence" value="ECO:0007669"/>
    <property type="project" value="TreeGrafter"/>
</dbReference>
<dbReference type="GO" id="GO:0002161">
    <property type="term" value="F:aminoacyl-tRNA deacylase activity"/>
    <property type="evidence" value="ECO:0007669"/>
    <property type="project" value="InterPro"/>
</dbReference>
<dbReference type="GO" id="GO:0005524">
    <property type="term" value="F:ATP binding"/>
    <property type="evidence" value="ECO:0007669"/>
    <property type="project" value="UniProtKB-UniRule"/>
</dbReference>
<dbReference type="GO" id="GO:0004827">
    <property type="term" value="F:proline-tRNA ligase activity"/>
    <property type="evidence" value="ECO:0007669"/>
    <property type="project" value="UniProtKB-UniRule"/>
</dbReference>
<dbReference type="GO" id="GO:0006433">
    <property type="term" value="P:prolyl-tRNA aminoacylation"/>
    <property type="evidence" value="ECO:0007669"/>
    <property type="project" value="UniProtKB-UniRule"/>
</dbReference>
<dbReference type="CDD" id="cd04334">
    <property type="entry name" value="ProRS-INS"/>
    <property type="match status" value="1"/>
</dbReference>
<dbReference type="CDD" id="cd00861">
    <property type="entry name" value="ProRS_anticodon_short"/>
    <property type="match status" value="1"/>
</dbReference>
<dbReference type="CDD" id="cd00779">
    <property type="entry name" value="ProRS_core_prok"/>
    <property type="match status" value="1"/>
</dbReference>
<dbReference type="FunFam" id="3.30.930.10:FF:000065">
    <property type="entry name" value="Proline--tRNA ligase"/>
    <property type="match status" value="1"/>
</dbReference>
<dbReference type="FunFam" id="3.30.930.10:FF:000167">
    <property type="entry name" value="Proline--tRNA ligase"/>
    <property type="match status" value="1"/>
</dbReference>
<dbReference type="Gene3D" id="3.40.50.800">
    <property type="entry name" value="Anticodon-binding domain"/>
    <property type="match status" value="1"/>
</dbReference>
<dbReference type="Gene3D" id="3.30.930.10">
    <property type="entry name" value="Bira Bifunctional Protein, Domain 2"/>
    <property type="match status" value="2"/>
</dbReference>
<dbReference type="Gene3D" id="3.90.960.10">
    <property type="entry name" value="YbaK/aminoacyl-tRNA synthetase-associated domain"/>
    <property type="match status" value="1"/>
</dbReference>
<dbReference type="HAMAP" id="MF_01569">
    <property type="entry name" value="Pro_tRNA_synth_type1"/>
    <property type="match status" value="1"/>
</dbReference>
<dbReference type="InterPro" id="IPR002314">
    <property type="entry name" value="aa-tRNA-synt_IIb"/>
</dbReference>
<dbReference type="InterPro" id="IPR006195">
    <property type="entry name" value="aa-tRNA-synth_II"/>
</dbReference>
<dbReference type="InterPro" id="IPR045864">
    <property type="entry name" value="aa-tRNA-synth_II/BPL/LPL"/>
</dbReference>
<dbReference type="InterPro" id="IPR004154">
    <property type="entry name" value="Anticodon-bd"/>
</dbReference>
<dbReference type="InterPro" id="IPR036621">
    <property type="entry name" value="Anticodon-bd_dom_sf"/>
</dbReference>
<dbReference type="InterPro" id="IPR002316">
    <property type="entry name" value="Pro-tRNA-ligase_IIa"/>
</dbReference>
<dbReference type="InterPro" id="IPR004500">
    <property type="entry name" value="Pro-tRNA-synth_IIa_bac-type"/>
</dbReference>
<dbReference type="InterPro" id="IPR023717">
    <property type="entry name" value="Pro-tRNA-Synthase_IIa_type1"/>
</dbReference>
<dbReference type="InterPro" id="IPR050062">
    <property type="entry name" value="Pro-tRNA_synthetase"/>
</dbReference>
<dbReference type="InterPro" id="IPR044140">
    <property type="entry name" value="ProRS_anticodon_short"/>
</dbReference>
<dbReference type="InterPro" id="IPR033730">
    <property type="entry name" value="ProRS_core_prok"/>
</dbReference>
<dbReference type="InterPro" id="IPR036754">
    <property type="entry name" value="YbaK/aa-tRNA-synt-asso_dom_sf"/>
</dbReference>
<dbReference type="InterPro" id="IPR007214">
    <property type="entry name" value="YbaK/aa-tRNA-synth-assoc-dom"/>
</dbReference>
<dbReference type="NCBIfam" id="NF006625">
    <property type="entry name" value="PRK09194.1"/>
    <property type="match status" value="1"/>
</dbReference>
<dbReference type="NCBIfam" id="TIGR00409">
    <property type="entry name" value="proS_fam_II"/>
    <property type="match status" value="1"/>
</dbReference>
<dbReference type="PANTHER" id="PTHR42753">
    <property type="entry name" value="MITOCHONDRIAL RIBOSOME PROTEIN L39/PROLYL-TRNA LIGASE FAMILY MEMBER"/>
    <property type="match status" value="1"/>
</dbReference>
<dbReference type="PANTHER" id="PTHR42753:SF2">
    <property type="entry name" value="PROLINE--TRNA LIGASE"/>
    <property type="match status" value="1"/>
</dbReference>
<dbReference type="Pfam" id="PF03129">
    <property type="entry name" value="HGTP_anticodon"/>
    <property type="match status" value="1"/>
</dbReference>
<dbReference type="Pfam" id="PF00587">
    <property type="entry name" value="tRNA-synt_2b"/>
    <property type="match status" value="1"/>
</dbReference>
<dbReference type="Pfam" id="PF04073">
    <property type="entry name" value="tRNA_edit"/>
    <property type="match status" value="1"/>
</dbReference>
<dbReference type="PRINTS" id="PR01046">
    <property type="entry name" value="TRNASYNTHPRO"/>
</dbReference>
<dbReference type="SUPFAM" id="SSF52954">
    <property type="entry name" value="Class II aaRS ABD-related"/>
    <property type="match status" value="1"/>
</dbReference>
<dbReference type="SUPFAM" id="SSF55681">
    <property type="entry name" value="Class II aaRS and biotin synthetases"/>
    <property type="match status" value="1"/>
</dbReference>
<dbReference type="SUPFAM" id="SSF55826">
    <property type="entry name" value="YbaK/ProRS associated domain"/>
    <property type="match status" value="1"/>
</dbReference>
<dbReference type="PROSITE" id="PS50862">
    <property type="entry name" value="AA_TRNA_LIGASE_II"/>
    <property type="match status" value="1"/>
</dbReference>
<reference key="1">
    <citation type="journal article" date="2009" name="J. Bacteriol.">
        <title>The genome of Thermosipho africanus TCF52B: lateral genetic connections to the Firmicutes and Archaea.</title>
        <authorList>
            <person name="Nesboe C.L."/>
            <person name="Bapteste E."/>
            <person name="Curtis B."/>
            <person name="Dahle H."/>
            <person name="Lopez P."/>
            <person name="Macleod D."/>
            <person name="Dlutek M."/>
            <person name="Bowman S."/>
            <person name="Zhaxybayeva O."/>
            <person name="Birkeland N.-K."/>
            <person name="Doolittle W.F."/>
        </authorList>
    </citation>
    <scope>NUCLEOTIDE SEQUENCE [LARGE SCALE GENOMIC DNA]</scope>
    <source>
        <strain>TCF52B</strain>
    </source>
</reference>
<comment type="function">
    <text evidence="1">Catalyzes the attachment of proline to tRNA(Pro) in a two-step reaction: proline is first activated by ATP to form Pro-AMP and then transferred to the acceptor end of tRNA(Pro). As ProRS can inadvertently accommodate and process non-cognate amino acids such as alanine and cysteine, to avoid such errors it has two additional distinct editing activities against alanine. One activity is designated as 'pretransfer' editing and involves the tRNA(Pro)-independent hydrolysis of activated Ala-AMP. The other activity is designated 'posttransfer' editing and involves deacylation of mischarged Ala-tRNA(Pro). The misacylated Cys-tRNA(Pro) is not edited by ProRS.</text>
</comment>
<comment type="catalytic activity">
    <reaction evidence="1">
        <text>tRNA(Pro) + L-proline + ATP = L-prolyl-tRNA(Pro) + AMP + diphosphate</text>
        <dbReference type="Rhea" id="RHEA:14305"/>
        <dbReference type="Rhea" id="RHEA-COMP:9700"/>
        <dbReference type="Rhea" id="RHEA-COMP:9702"/>
        <dbReference type="ChEBI" id="CHEBI:30616"/>
        <dbReference type="ChEBI" id="CHEBI:33019"/>
        <dbReference type="ChEBI" id="CHEBI:60039"/>
        <dbReference type="ChEBI" id="CHEBI:78442"/>
        <dbReference type="ChEBI" id="CHEBI:78532"/>
        <dbReference type="ChEBI" id="CHEBI:456215"/>
        <dbReference type="EC" id="6.1.1.15"/>
    </reaction>
</comment>
<comment type="subunit">
    <text evidence="1">Homodimer.</text>
</comment>
<comment type="subcellular location">
    <subcellularLocation>
        <location evidence="1">Cytoplasm</location>
    </subcellularLocation>
</comment>
<comment type="domain">
    <text evidence="1">Consists of three domains: the N-terminal catalytic domain, the editing domain and the C-terminal anticodon-binding domain.</text>
</comment>
<comment type="similarity">
    <text evidence="1">Belongs to the class-II aminoacyl-tRNA synthetase family. ProS type 1 subfamily.</text>
</comment>
<protein>
    <recommendedName>
        <fullName evidence="1">Proline--tRNA ligase</fullName>
        <ecNumber evidence="1">6.1.1.15</ecNumber>
    </recommendedName>
    <alternativeName>
        <fullName evidence="1">Prolyl-tRNA synthetase</fullName>
        <shortName evidence="1">ProRS</shortName>
    </alternativeName>
</protein>